<gene>
    <name type="primary">ymfI</name>
    <name type="ordered locus">b1143</name>
    <name type="ordered locus">JW5168</name>
</gene>
<feature type="chain" id="PRO_0000168843" description="Uncharacterized protein YmfI">
    <location>
        <begin position="1"/>
        <end position="113"/>
    </location>
</feature>
<dbReference type="EMBL" id="U00096">
    <property type="protein sequence ID" value="AAC74227.2"/>
    <property type="molecule type" value="Genomic_DNA"/>
</dbReference>
<dbReference type="EMBL" id="AP009048">
    <property type="protein sequence ID" value="BAE76378.1"/>
    <property type="molecule type" value="Genomic_DNA"/>
</dbReference>
<dbReference type="PIR" id="D64859">
    <property type="entry name" value="D64859"/>
</dbReference>
<dbReference type="RefSeq" id="NP_415661.2">
    <property type="nucleotide sequence ID" value="NC_000913.3"/>
</dbReference>
<dbReference type="RefSeq" id="WP_010723095.1">
    <property type="nucleotide sequence ID" value="NZ_CP064683.1"/>
</dbReference>
<dbReference type="SMR" id="P75972"/>
<dbReference type="BioGRID" id="4262848">
    <property type="interactions" value="13"/>
</dbReference>
<dbReference type="FunCoup" id="P75972">
    <property type="interactions" value="7"/>
</dbReference>
<dbReference type="STRING" id="511145.b1143"/>
<dbReference type="PaxDb" id="511145-b1143"/>
<dbReference type="EnsemblBacteria" id="AAC74227">
    <property type="protein sequence ID" value="AAC74227"/>
    <property type="gene ID" value="b1143"/>
</dbReference>
<dbReference type="GeneID" id="945712"/>
<dbReference type="KEGG" id="ecj:JW5168"/>
<dbReference type="KEGG" id="eco:b1143"/>
<dbReference type="EchoBASE" id="EB3996"/>
<dbReference type="HOGENOM" id="CLU_2129615_0_0_6"/>
<dbReference type="InParanoid" id="P75972"/>
<dbReference type="BioCyc" id="EcoCyc:G6587-MONOMER"/>
<dbReference type="PRO" id="PR:P75972"/>
<dbReference type="Proteomes" id="UP000000625">
    <property type="component" value="Chromosome"/>
</dbReference>
<reference key="1">
    <citation type="journal article" date="1997" name="Science">
        <title>The complete genome sequence of Escherichia coli K-12.</title>
        <authorList>
            <person name="Blattner F.R."/>
            <person name="Plunkett G. III"/>
            <person name="Bloch C.A."/>
            <person name="Perna N.T."/>
            <person name="Burland V."/>
            <person name="Riley M."/>
            <person name="Collado-Vides J."/>
            <person name="Glasner J.D."/>
            <person name="Rode C.K."/>
            <person name="Mayhew G.F."/>
            <person name="Gregor J."/>
            <person name="Davis N.W."/>
            <person name="Kirkpatrick H.A."/>
            <person name="Goeden M.A."/>
            <person name="Rose D.J."/>
            <person name="Mau B."/>
            <person name="Shao Y."/>
        </authorList>
    </citation>
    <scope>NUCLEOTIDE SEQUENCE [LARGE SCALE GENOMIC DNA]</scope>
    <source>
        <strain>K12 / MG1655 / ATCC 47076</strain>
    </source>
</reference>
<reference key="2">
    <citation type="journal article" date="2006" name="Mol. Syst. Biol.">
        <title>Highly accurate genome sequences of Escherichia coli K-12 strains MG1655 and W3110.</title>
        <authorList>
            <person name="Hayashi K."/>
            <person name="Morooka N."/>
            <person name="Yamamoto Y."/>
            <person name="Fujita K."/>
            <person name="Isono K."/>
            <person name="Choi S."/>
            <person name="Ohtsubo E."/>
            <person name="Baba T."/>
            <person name="Wanner B.L."/>
            <person name="Mori H."/>
            <person name="Horiuchi T."/>
        </authorList>
    </citation>
    <scope>NUCLEOTIDE SEQUENCE [LARGE SCALE GENOMIC DNA]</scope>
    <source>
        <strain>K12 / W3110 / ATCC 27325 / DSM 5911</strain>
    </source>
</reference>
<protein>
    <recommendedName>
        <fullName>Uncharacterized protein YmfI</fullName>
    </recommendedName>
</protein>
<accession>P75972</accession>
<accession>Q2MBH8</accession>
<name>YMFI_ECOLI</name>
<keyword id="KW-1185">Reference proteome</keyword>
<organism>
    <name type="scientific">Escherichia coli (strain K12)</name>
    <dbReference type="NCBI Taxonomy" id="83333"/>
    <lineage>
        <taxon>Bacteria</taxon>
        <taxon>Pseudomonadati</taxon>
        <taxon>Pseudomonadota</taxon>
        <taxon>Gammaproteobacteria</taxon>
        <taxon>Enterobacterales</taxon>
        <taxon>Enterobacteriaceae</taxon>
        <taxon>Escherichia</taxon>
    </lineage>
</organism>
<proteinExistence type="predicted"/>
<sequence>MNQFYVHVRLFEDTAEQTKKFEELMLNFLYQKTVKESDDSCCRLIPEGYILKSTMNCQQILDQTFSIANSAGVDANIFVCKFEQSACLLPSASLVGNDFVHYDLTPKPIKLDS</sequence>